<gene>
    <name evidence="1" type="primary">ctaA</name>
    <name type="ordered locus">TM1040_1335</name>
</gene>
<sequence>MSNRTIFEEVSSDSKQQSSPTPGGIDRKRRGARGAIRVWLAVLFALVVAMIAVGGLTRLTDSGLSITEWRPVTGAVPPMSEAEWQAEFEKYKQIDQYHLMNTWMELSDFKTIYWWEWGHRQLGRVIGLIWALGFFGFLVTRSIPTGWTGRLLLPGILGGVQGAIGWWMVASGVTLGEGMTSVASYRLATHLGLAFVILGFLAWYMFLLGREERDLMQARRLKEEKLFGMSTGLLHFAFLQILLGALVAGIDAGRSYTDWPLMGGQIFPPRPFMIEPLWKNFFENPGLVQFIHRVAGYLLFAFAVVVWLRGRRSAHKATQFAFNAVFAALSLQLVIGIVTVMTAAPVEIAIVHQAVAVLVWVLILRARFLSAYPVATSIKGH</sequence>
<dbReference type="EC" id="1.17.99.9" evidence="1"/>
<dbReference type="EMBL" id="CP000377">
    <property type="protein sequence ID" value="ABF64068.1"/>
    <property type="molecule type" value="Genomic_DNA"/>
</dbReference>
<dbReference type="RefSeq" id="WP_011538674.1">
    <property type="nucleotide sequence ID" value="NC_008044.1"/>
</dbReference>
<dbReference type="SMR" id="Q1GGZ8"/>
<dbReference type="STRING" id="292414.TM1040_1335"/>
<dbReference type="KEGG" id="sit:TM1040_1335"/>
<dbReference type="eggNOG" id="COG1612">
    <property type="taxonomic scope" value="Bacteria"/>
</dbReference>
<dbReference type="HOGENOM" id="CLU_017627_0_0_5"/>
<dbReference type="OrthoDB" id="9793156at2"/>
<dbReference type="UniPathway" id="UPA00269">
    <property type="reaction ID" value="UER00713"/>
</dbReference>
<dbReference type="Proteomes" id="UP000000636">
    <property type="component" value="Chromosome"/>
</dbReference>
<dbReference type="GO" id="GO:0005886">
    <property type="term" value="C:plasma membrane"/>
    <property type="evidence" value="ECO:0007669"/>
    <property type="project" value="UniProtKB-SubCell"/>
</dbReference>
<dbReference type="GO" id="GO:0046872">
    <property type="term" value="F:metal ion binding"/>
    <property type="evidence" value="ECO:0007669"/>
    <property type="project" value="UniProtKB-KW"/>
</dbReference>
<dbReference type="GO" id="GO:0016653">
    <property type="term" value="F:oxidoreductase activity, acting on NAD(P)H, heme protein as acceptor"/>
    <property type="evidence" value="ECO:0007669"/>
    <property type="project" value="InterPro"/>
</dbReference>
<dbReference type="GO" id="GO:0006784">
    <property type="term" value="P:heme A biosynthetic process"/>
    <property type="evidence" value="ECO:0007669"/>
    <property type="project" value="UniProtKB-UniRule"/>
</dbReference>
<dbReference type="HAMAP" id="MF_01665">
    <property type="entry name" value="HemeA_synth_type2"/>
    <property type="match status" value="1"/>
</dbReference>
<dbReference type="InterPro" id="IPR003780">
    <property type="entry name" value="COX15/CtaA_fam"/>
</dbReference>
<dbReference type="InterPro" id="IPR054616">
    <property type="entry name" value="HemA_synt_rhodobact"/>
</dbReference>
<dbReference type="InterPro" id="IPR023754">
    <property type="entry name" value="HemeA_Synthase_type2"/>
</dbReference>
<dbReference type="NCBIfam" id="NF045570">
    <property type="entry name" value="HemSynCtaAAlphapr"/>
    <property type="match status" value="1"/>
</dbReference>
<dbReference type="PANTHER" id="PTHR23289">
    <property type="entry name" value="CYTOCHROME C OXIDASE ASSEMBLY PROTEIN COX15"/>
    <property type="match status" value="1"/>
</dbReference>
<dbReference type="PANTHER" id="PTHR23289:SF2">
    <property type="entry name" value="CYTOCHROME C OXIDASE ASSEMBLY PROTEIN COX15 HOMOLOG"/>
    <property type="match status" value="1"/>
</dbReference>
<dbReference type="Pfam" id="PF02628">
    <property type="entry name" value="COX15-CtaA"/>
    <property type="match status" value="1"/>
</dbReference>
<feature type="chain" id="PRO_0000349083" description="Heme A synthase">
    <location>
        <begin position="1"/>
        <end position="381"/>
    </location>
</feature>
<feature type="transmembrane region" description="Helical" evidence="1">
    <location>
        <begin position="36"/>
        <end position="56"/>
    </location>
</feature>
<feature type="transmembrane region" description="Helical" evidence="1">
    <location>
        <begin position="125"/>
        <end position="145"/>
    </location>
</feature>
<feature type="transmembrane region" description="Helical" evidence="1">
    <location>
        <begin position="151"/>
        <end position="171"/>
    </location>
</feature>
<feature type="transmembrane region" description="Helical" evidence="1">
    <location>
        <begin position="187"/>
        <end position="207"/>
    </location>
</feature>
<feature type="transmembrane region" description="Helical" evidence="1">
    <location>
        <begin position="230"/>
        <end position="250"/>
    </location>
</feature>
<feature type="transmembrane region" description="Helical" evidence="1">
    <location>
        <begin position="287"/>
        <end position="307"/>
    </location>
</feature>
<feature type="transmembrane region" description="Helical" evidence="1">
    <location>
        <begin position="320"/>
        <end position="340"/>
    </location>
</feature>
<feature type="transmembrane region" description="Helical" evidence="1">
    <location>
        <begin position="344"/>
        <end position="364"/>
    </location>
</feature>
<feature type="region of interest" description="Disordered" evidence="2">
    <location>
        <begin position="1"/>
        <end position="28"/>
    </location>
</feature>
<feature type="binding site" description="axial binding residue" evidence="1">
    <location>
        <position position="292"/>
    </location>
    <ligand>
        <name>heme</name>
        <dbReference type="ChEBI" id="CHEBI:30413"/>
    </ligand>
    <ligandPart>
        <name>Fe</name>
        <dbReference type="ChEBI" id="CHEBI:18248"/>
    </ligandPart>
</feature>
<feature type="binding site" description="axial binding residue" evidence="1">
    <location>
        <position position="352"/>
    </location>
    <ligand>
        <name>heme</name>
        <dbReference type="ChEBI" id="CHEBI:30413"/>
    </ligand>
    <ligandPart>
        <name>Fe</name>
        <dbReference type="ChEBI" id="CHEBI:18248"/>
    </ligandPart>
</feature>
<evidence type="ECO:0000255" key="1">
    <source>
        <dbReference type="HAMAP-Rule" id="MF_01665"/>
    </source>
</evidence>
<evidence type="ECO:0000256" key="2">
    <source>
        <dbReference type="SAM" id="MobiDB-lite"/>
    </source>
</evidence>
<comment type="function">
    <text evidence="1">Catalyzes the conversion of heme O to heme A by two successive hydroxylations of the methyl group at C8. The first hydroxylation forms heme I, the second hydroxylation results in an unstable dihydroxymethyl group, which spontaneously dehydrates, resulting in the formyl group of heme A.</text>
</comment>
<comment type="catalytic activity">
    <reaction evidence="1">
        <text>Fe(II)-heme o + 2 A + H2O = Fe(II)-heme a + 2 AH2</text>
        <dbReference type="Rhea" id="RHEA:63388"/>
        <dbReference type="ChEBI" id="CHEBI:13193"/>
        <dbReference type="ChEBI" id="CHEBI:15377"/>
        <dbReference type="ChEBI" id="CHEBI:17499"/>
        <dbReference type="ChEBI" id="CHEBI:60530"/>
        <dbReference type="ChEBI" id="CHEBI:61715"/>
        <dbReference type="EC" id="1.17.99.9"/>
    </reaction>
    <physiologicalReaction direction="left-to-right" evidence="1">
        <dbReference type="Rhea" id="RHEA:63389"/>
    </physiologicalReaction>
</comment>
<comment type="cofactor">
    <cofactor evidence="1">
        <name>heme b</name>
        <dbReference type="ChEBI" id="CHEBI:60344"/>
    </cofactor>
</comment>
<comment type="pathway">
    <text evidence="1">Porphyrin-containing compound metabolism; heme A biosynthesis; heme A from heme O: step 1/1.</text>
</comment>
<comment type="subunit">
    <text evidence="1">Interacts with CtaB.</text>
</comment>
<comment type="subcellular location">
    <subcellularLocation>
        <location evidence="1">Cell membrane</location>
        <topology evidence="1">Multi-pass membrane protein</topology>
    </subcellularLocation>
</comment>
<comment type="similarity">
    <text evidence="1">Belongs to the COX15/CtaA family. Type 2 subfamily.</text>
</comment>
<accession>Q1GGZ8</accession>
<organism>
    <name type="scientific">Ruegeria sp. (strain TM1040)</name>
    <name type="common">Silicibacter sp.</name>
    <dbReference type="NCBI Taxonomy" id="292414"/>
    <lineage>
        <taxon>Bacteria</taxon>
        <taxon>Pseudomonadati</taxon>
        <taxon>Pseudomonadota</taxon>
        <taxon>Alphaproteobacteria</taxon>
        <taxon>Rhodobacterales</taxon>
        <taxon>Roseobacteraceae</taxon>
        <taxon>Ruegeria</taxon>
    </lineage>
</organism>
<proteinExistence type="inferred from homology"/>
<protein>
    <recommendedName>
        <fullName evidence="1">Heme A synthase</fullName>
        <shortName evidence="1">HAS</shortName>
        <ecNumber evidence="1">1.17.99.9</ecNumber>
    </recommendedName>
    <alternativeName>
        <fullName evidence="1">Cytochrome aa3-controlling protein</fullName>
    </alternativeName>
</protein>
<reference key="1">
    <citation type="submission" date="2006-05" db="EMBL/GenBank/DDBJ databases">
        <title>Complete sequence of chromosome of Silicibacter sp. TM1040.</title>
        <authorList>
            <consortium name="US DOE Joint Genome Institute"/>
            <person name="Copeland A."/>
            <person name="Lucas S."/>
            <person name="Lapidus A."/>
            <person name="Barry K."/>
            <person name="Detter J.C."/>
            <person name="Glavina del Rio T."/>
            <person name="Hammon N."/>
            <person name="Israni S."/>
            <person name="Dalin E."/>
            <person name="Tice H."/>
            <person name="Pitluck S."/>
            <person name="Brettin T."/>
            <person name="Bruce D."/>
            <person name="Han C."/>
            <person name="Tapia R."/>
            <person name="Goodwin L."/>
            <person name="Thompson L.S."/>
            <person name="Gilna P."/>
            <person name="Schmutz J."/>
            <person name="Larimer F."/>
            <person name="Land M."/>
            <person name="Hauser L."/>
            <person name="Kyrpides N."/>
            <person name="Kim E."/>
            <person name="Belas R."/>
            <person name="Moran M.A."/>
            <person name="Buchan A."/>
            <person name="Gonzalez J.M."/>
            <person name="Schell M.A."/>
            <person name="Sun F."/>
            <person name="Richardson P."/>
        </authorList>
    </citation>
    <scope>NUCLEOTIDE SEQUENCE [LARGE SCALE GENOMIC DNA]</scope>
    <source>
        <strain>TM1040</strain>
    </source>
</reference>
<name>CTAA_RUEST</name>
<keyword id="KW-1003">Cell membrane</keyword>
<keyword id="KW-0350">Heme biosynthesis</keyword>
<keyword id="KW-0408">Iron</keyword>
<keyword id="KW-0472">Membrane</keyword>
<keyword id="KW-0479">Metal-binding</keyword>
<keyword id="KW-0560">Oxidoreductase</keyword>
<keyword id="KW-1185">Reference proteome</keyword>
<keyword id="KW-0812">Transmembrane</keyword>
<keyword id="KW-1133">Transmembrane helix</keyword>